<keyword id="KW-1072">Activation of host autophagy by virus</keyword>
<keyword id="KW-0067">ATP-binding</keyword>
<keyword id="KW-0068">Autocatalytic cleavage</keyword>
<keyword id="KW-0167">Capsid protein</keyword>
<keyword id="KW-0191">Covalent protein-RNA linkage</keyword>
<keyword id="KW-0235">DNA replication</keyword>
<keyword id="KW-1262">Eukaryotic host gene expression shutoff by virus</keyword>
<keyword id="KW-1193">Eukaryotic host translation shutoff by virus</keyword>
<keyword id="KW-0347">Helicase</keyword>
<keyword id="KW-1035">Host cytoplasm</keyword>
<keyword id="KW-1036">Host cytoplasmic vesicle</keyword>
<keyword id="KW-1190">Host gene expression shutoff by virus</keyword>
<keyword id="KW-1043">Host membrane</keyword>
<keyword id="KW-1192">Host mRNA suppression by virus</keyword>
<keyword id="KW-1048">Host nucleus</keyword>
<keyword id="KW-0945">Host-virus interaction</keyword>
<keyword id="KW-0378">Hydrolase</keyword>
<keyword id="KW-1090">Inhibition of host innate immune response by virus</keyword>
<keyword id="KW-1099">Inhibition of host mRNA nuclear export by virus</keyword>
<keyword id="KW-1088">Inhibition of host RIG-I by virus</keyword>
<keyword id="KW-1113">Inhibition of host RLR pathway by virus</keyword>
<keyword id="KW-0407">Ion channel</keyword>
<keyword id="KW-0406">Ion transport</keyword>
<keyword id="KW-0449">Lipoprotein</keyword>
<keyword id="KW-0460">Magnesium</keyword>
<keyword id="KW-0472">Membrane</keyword>
<keyword id="KW-0479">Metal-binding</keyword>
<keyword id="KW-0519">Myristate</keyword>
<keyword id="KW-0547">Nucleotide-binding</keyword>
<keyword id="KW-0548">Nucleotidyltransferase</keyword>
<keyword id="KW-0597">Phosphoprotein</keyword>
<keyword id="KW-1172">Pore-mediated penetration of viral genome into host cell</keyword>
<keyword id="KW-0645">Protease</keyword>
<keyword id="KW-0677">Repeat</keyword>
<keyword id="KW-0694">RNA-binding</keyword>
<keyword id="KW-0696">RNA-directed RNA polymerase</keyword>
<keyword id="KW-1143">T=pseudo3 icosahedral capsid protein</keyword>
<keyword id="KW-0788">Thiol protease</keyword>
<keyword id="KW-0808">Transferase</keyword>
<keyword id="KW-0813">Transport</keyword>
<keyword id="KW-1161">Viral attachment to host cell</keyword>
<keyword id="KW-0899">Viral immunoevasion</keyword>
<keyword id="KW-1182">Viral ion channel</keyword>
<keyword id="KW-1162">Viral penetration into host cytoplasm</keyword>
<keyword id="KW-0693">Viral RNA replication</keyword>
<keyword id="KW-0946">Virion</keyword>
<keyword id="KW-1164">Virus endocytosis by host</keyword>
<keyword id="KW-1160">Virus entry into host cell</keyword>
<keyword id="KW-0862">Zinc</keyword>
<keyword id="KW-0863">Zinc-finger</keyword>
<dbReference type="EC" id="3.4.22.29" evidence="2"/>
<dbReference type="EC" id="3.6.1.15" evidence="2"/>
<dbReference type="EC" id="3.4.22.28" evidence="12"/>
<dbReference type="EC" id="2.7.7.48" evidence="10"/>
<dbReference type="EMBL" id="AF105342">
    <property type="protein sequence ID" value="AAF12719.1"/>
    <property type="molecule type" value="Genomic_RNA"/>
</dbReference>
<dbReference type="EMBL" id="AF039205">
    <property type="protein sequence ID" value="AAD02132.1"/>
    <property type="molecule type" value="Genomic_RNA"/>
</dbReference>
<dbReference type="EMBL" id="AF114384">
    <property type="protein sequence ID" value="AAF21972.1"/>
    <property type="molecule type" value="Genomic_RNA"/>
</dbReference>
<dbReference type="SMR" id="Q9QL88"/>
<dbReference type="MEROPS" id="C03.011"/>
<dbReference type="MEROPS" id="C03.020"/>
<dbReference type="MEROPS" id="N08.001"/>
<dbReference type="Proteomes" id="UP000007762">
    <property type="component" value="Genome"/>
</dbReference>
<dbReference type="Proteomes" id="UP000173219">
    <property type="component" value="Segment"/>
</dbReference>
<dbReference type="Proteomes" id="UP000180755">
    <property type="component" value="Genome"/>
</dbReference>
<dbReference type="GO" id="GO:0044162">
    <property type="term" value="C:host cell cytoplasmic vesicle membrane"/>
    <property type="evidence" value="ECO:0007669"/>
    <property type="project" value="UniProtKB-SubCell"/>
</dbReference>
<dbReference type="GO" id="GO:0042025">
    <property type="term" value="C:host cell nucleus"/>
    <property type="evidence" value="ECO:0007669"/>
    <property type="project" value="UniProtKB-SubCell"/>
</dbReference>
<dbReference type="GO" id="GO:0016020">
    <property type="term" value="C:membrane"/>
    <property type="evidence" value="ECO:0007669"/>
    <property type="project" value="UniProtKB-KW"/>
</dbReference>
<dbReference type="GO" id="GO:0039618">
    <property type="term" value="C:T=pseudo3 icosahedral viral capsid"/>
    <property type="evidence" value="ECO:0007669"/>
    <property type="project" value="UniProtKB-KW"/>
</dbReference>
<dbReference type="GO" id="GO:0005524">
    <property type="term" value="F:ATP binding"/>
    <property type="evidence" value="ECO:0007669"/>
    <property type="project" value="UniProtKB-KW"/>
</dbReference>
<dbReference type="GO" id="GO:0016887">
    <property type="term" value="F:ATP hydrolysis activity"/>
    <property type="evidence" value="ECO:0007669"/>
    <property type="project" value="InterPro"/>
</dbReference>
<dbReference type="GO" id="GO:0015267">
    <property type="term" value="F:channel activity"/>
    <property type="evidence" value="ECO:0007669"/>
    <property type="project" value="UniProtKB-KW"/>
</dbReference>
<dbReference type="GO" id="GO:0004197">
    <property type="term" value="F:cysteine-type endopeptidase activity"/>
    <property type="evidence" value="ECO:0007669"/>
    <property type="project" value="UniProtKB-EC"/>
</dbReference>
<dbReference type="GO" id="GO:0003723">
    <property type="term" value="F:RNA binding"/>
    <property type="evidence" value="ECO:0007669"/>
    <property type="project" value="UniProtKB-KW"/>
</dbReference>
<dbReference type="GO" id="GO:0003724">
    <property type="term" value="F:RNA helicase activity"/>
    <property type="evidence" value="ECO:0007669"/>
    <property type="project" value="InterPro"/>
</dbReference>
<dbReference type="GO" id="GO:0003968">
    <property type="term" value="F:RNA-directed RNA polymerase activity"/>
    <property type="evidence" value="ECO:0007669"/>
    <property type="project" value="UniProtKB-KW"/>
</dbReference>
<dbReference type="GO" id="GO:0005198">
    <property type="term" value="F:structural molecule activity"/>
    <property type="evidence" value="ECO:0007669"/>
    <property type="project" value="InterPro"/>
</dbReference>
<dbReference type="GO" id="GO:0008270">
    <property type="term" value="F:zinc ion binding"/>
    <property type="evidence" value="ECO:0007669"/>
    <property type="project" value="UniProtKB-KW"/>
</dbReference>
<dbReference type="GO" id="GO:0006260">
    <property type="term" value="P:DNA replication"/>
    <property type="evidence" value="ECO:0007669"/>
    <property type="project" value="UniProtKB-KW"/>
</dbReference>
<dbReference type="GO" id="GO:0006351">
    <property type="term" value="P:DNA-templated transcription"/>
    <property type="evidence" value="ECO:0007669"/>
    <property type="project" value="InterPro"/>
</dbReference>
<dbReference type="GO" id="GO:0075509">
    <property type="term" value="P:endocytosis involved in viral entry into host cell"/>
    <property type="evidence" value="ECO:0007669"/>
    <property type="project" value="UniProtKB-KW"/>
</dbReference>
<dbReference type="GO" id="GO:0034220">
    <property type="term" value="P:monoatomic ion transmembrane transport"/>
    <property type="evidence" value="ECO:0007669"/>
    <property type="project" value="UniProtKB-KW"/>
</dbReference>
<dbReference type="GO" id="GO:0006508">
    <property type="term" value="P:proteolysis"/>
    <property type="evidence" value="ECO:0007669"/>
    <property type="project" value="UniProtKB-KW"/>
</dbReference>
<dbReference type="GO" id="GO:0044694">
    <property type="term" value="P:symbiont genome entry into host cell via pore formation in plasma membrane"/>
    <property type="evidence" value="ECO:0007669"/>
    <property type="project" value="UniProtKB-KW"/>
</dbReference>
<dbReference type="GO" id="GO:0039520">
    <property type="term" value="P:symbiont-mediated activation of host autophagy"/>
    <property type="evidence" value="ECO:0000250"/>
    <property type="project" value="UniProtKB"/>
</dbReference>
<dbReference type="GO" id="GO:0039540">
    <property type="term" value="P:symbiont-mediated suppression of host cytoplasmic pattern recognition receptor signaling pathway via inhibition of RIG-I activity"/>
    <property type="evidence" value="ECO:0007669"/>
    <property type="project" value="UniProtKB-KW"/>
</dbReference>
<dbReference type="GO" id="GO:0039522">
    <property type="term" value="P:symbiont-mediated suppression of host mRNA export from nucleus"/>
    <property type="evidence" value="ECO:0007669"/>
    <property type="project" value="UniProtKB-KW"/>
</dbReference>
<dbReference type="GO" id="GO:0039694">
    <property type="term" value="P:viral RNA genome replication"/>
    <property type="evidence" value="ECO:0007669"/>
    <property type="project" value="InterPro"/>
</dbReference>
<dbReference type="GO" id="GO:0019062">
    <property type="term" value="P:virion attachment to host cell"/>
    <property type="evidence" value="ECO:0007669"/>
    <property type="project" value="UniProtKB-KW"/>
</dbReference>
<dbReference type="CDD" id="cd23213">
    <property type="entry name" value="Enterovirus_RdRp"/>
    <property type="match status" value="1"/>
</dbReference>
<dbReference type="CDD" id="cd00205">
    <property type="entry name" value="rhv_like"/>
    <property type="match status" value="3"/>
</dbReference>
<dbReference type="FunFam" id="1.20.960.20:FF:000001">
    <property type="entry name" value="Genome polyprotein"/>
    <property type="match status" value="1"/>
</dbReference>
<dbReference type="FunFam" id="2.40.10.10:FF:000018">
    <property type="entry name" value="Genome polyprotein"/>
    <property type="match status" value="1"/>
</dbReference>
<dbReference type="FunFam" id="2.40.10.10:FF:000020">
    <property type="entry name" value="Genome polyprotein"/>
    <property type="match status" value="1"/>
</dbReference>
<dbReference type="FunFam" id="2.40.10.10:FF:000022">
    <property type="entry name" value="Genome polyprotein"/>
    <property type="match status" value="1"/>
</dbReference>
<dbReference type="FunFam" id="2.60.120.20:FF:000001">
    <property type="entry name" value="Genome polyprotein"/>
    <property type="match status" value="1"/>
</dbReference>
<dbReference type="FunFam" id="2.60.120.20:FF:000002">
    <property type="entry name" value="Genome polyprotein"/>
    <property type="match status" value="1"/>
</dbReference>
<dbReference type="FunFam" id="2.60.120.20:FF:000004">
    <property type="entry name" value="Genome polyprotein"/>
    <property type="match status" value="1"/>
</dbReference>
<dbReference type="FunFam" id="3.30.70.270:FF:000008">
    <property type="entry name" value="Genome polyprotein"/>
    <property type="match status" value="1"/>
</dbReference>
<dbReference type="FunFam" id="4.10.80.10:FF:000001">
    <property type="entry name" value="Genome polyprotein"/>
    <property type="match status" value="1"/>
</dbReference>
<dbReference type="FunFam" id="4.10.880.10:FF:000001">
    <property type="entry name" value="Genome polyprotein"/>
    <property type="match status" value="1"/>
</dbReference>
<dbReference type="FunFam" id="4.10.880.10:FF:000002">
    <property type="entry name" value="Genome polyprotein"/>
    <property type="match status" value="1"/>
</dbReference>
<dbReference type="Gene3D" id="1.20.960.20">
    <property type="match status" value="1"/>
</dbReference>
<dbReference type="Gene3D" id="2.60.120.20">
    <property type="match status" value="3"/>
</dbReference>
<dbReference type="Gene3D" id="3.30.70.270">
    <property type="match status" value="1"/>
</dbReference>
<dbReference type="Gene3D" id="4.10.80.10">
    <property type="entry name" value="Picornavirus coat protein VP4"/>
    <property type="match status" value="1"/>
</dbReference>
<dbReference type="Gene3D" id="6.10.20.20">
    <property type="entry name" value="Poliovirus 3A protein-like"/>
    <property type="match status" value="1"/>
</dbReference>
<dbReference type="Gene3D" id="4.10.880.10">
    <property type="entry name" value="Poliovirus 3D polymerase Domain 1 (Nucleotidyltransferase)"/>
    <property type="match status" value="2"/>
</dbReference>
<dbReference type="Gene3D" id="2.40.10.10">
    <property type="entry name" value="Trypsin-like serine proteases"/>
    <property type="match status" value="4"/>
</dbReference>
<dbReference type="InterPro" id="IPR003593">
    <property type="entry name" value="AAA+_ATPase"/>
</dbReference>
<dbReference type="InterPro" id="IPR043502">
    <property type="entry name" value="DNA/RNA_pol_sf"/>
</dbReference>
<dbReference type="InterPro" id="IPR000605">
    <property type="entry name" value="Helicase_SF3_ssDNA/RNA_vir"/>
</dbReference>
<dbReference type="InterPro" id="IPR014759">
    <property type="entry name" value="Helicase_SF3_ssRNA_vir"/>
</dbReference>
<dbReference type="InterPro" id="IPR027417">
    <property type="entry name" value="P-loop_NTPase"/>
</dbReference>
<dbReference type="InterPro" id="IPR014838">
    <property type="entry name" value="P3A"/>
</dbReference>
<dbReference type="InterPro" id="IPR036203">
    <property type="entry name" value="P3A_soluble_dom"/>
</dbReference>
<dbReference type="InterPro" id="IPR044067">
    <property type="entry name" value="PCV_3C_PRO"/>
</dbReference>
<dbReference type="InterPro" id="IPR000081">
    <property type="entry name" value="Peptidase_C3"/>
</dbReference>
<dbReference type="InterPro" id="IPR000199">
    <property type="entry name" value="Peptidase_C3A/C3B_picornavir"/>
</dbReference>
<dbReference type="InterPro" id="IPR009003">
    <property type="entry name" value="Peptidase_S1_PA"/>
</dbReference>
<dbReference type="InterPro" id="IPR043504">
    <property type="entry name" value="Peptidase_S1_PA_chymotrypsin"/>
</dbReference>
<dbReference type="InterPro" id="IPR003138">
    <property type="entry name" value="Pico_P1A"/>
</dbReference>
<dbReference type="InterPro" id="IPR036988">
    <property type="entry name" value="Pico_P1A_sf"/>
</dbReference>
<dbReference type="InterPro" id="IPR002527">
    <property type="entry name" value="Pico_P2B"/>
</dbReference>
<dbReference type="InterPro" id="IPR001676">
    <property type="entry name" value="Picornavirus_capsid"/>
</dbReference>
<dbReference type="InterPro" id="IPR043128">
    <property type="entry name" value="Rev_trsase/Diguanyl_cyclase"/>
</dbReference>
<dbReference type="InterPro" id="IPR033703">
    <property type="entry name" value="Rhv-like"/>
</dbReference>
<dbReference type="InterPro" id="IPR001205">
    <property type="entry name" value="RNA-dir_pol_C"/>
</dbReference>
<dbReference type="InterPro" id="IPR007094">
    <property type="entry name" value="RNA-dir_pol_PSvirus"/>
</dbReference>
<dbReference type="InterPro" id="IPR029053">
    <property type="entry name" value="Viral_coat"/>
</dbReference>
<dbReference type="Pfam" id="PF08727">
    <property type="entry name" value="P3A"/>
    <property type="match status" value="1"/>
</dbReference>
<dbReference type="Pfam" id="PF00548">
    <property type="entry name" value="Peptidase_C3"/>
    <property type="match status" value="1"/>
</dbReference>
<dbReference type="Pfam" id="PF02226">
    <property type="entry name" value="Pico_P1A"/>
    <property type="match status" value="1"/>
</dbReference>
<dbReference type="Pfam" id="PF00947">
    <property type="entry name" value="Pico_P2A"/>
    <property type="match status" value="1"/>
</dbReference>
<dbReference type="Pfam" id="PF01552">
    <property type="entry name" value="Pico_P2B"/>
    <property type="match status" value="1"/>
</dbReference>
<dbReference type="Pfam" id="PF00680">
    <property type="entry name" value="RdRP_1"/>
    <property type="match status" value="1"/>
</dbReference>
<dbReference type="Pfam" id="PF00073">
    <property type="entry name" value="Rhv"/>
    <property type="match status" value="3"/>
</dbReference>
<dbReference type="Pfam" id="PF00910">
    <property type="entry name" value="RNA_helicase"/>
    <property type="match status" value="1"/>
</dbReference>
<dbReference type="SMART" id="SM00382">
    <property type="entry name" value="AAA"/>
    <property type="match status" value="1"/>
</dbReference>
<dbReference type="SUPFAM" id="SSF56672">
    <property type="entry name" value="DNA/RNA polymerases"/>
    <property type="match status" value="1"/>
</dbReference>
<dbReference type="SUPFAM" id="SSF52540">
    <property type="entry name" value="P-loop containing nucleoside triphosphate hydrolases"/>
    <property type="match status" value="1"/>
</dbReference>
<dbReference type="SUPFAM" id="SSF88633">
    <property type="entry name" value="Positive stranded ssRNA viruses"/>
    <property type="match status" value="2"/>
</dbReference>
<dbReference type="SUPFAM" id="SSF89043">
    <property type="entry name" value="Soluble domain of poliovirus core protein 3a"/>
    <property type="match status" value="1"/>
</dbReference>
<dbReference type="SUPFAM" id="SSF50494">
    <property type="entry name" value="Trypsin-like serine proteases"/>
    <property type="match status" value="2"/>
</dbReference>
<dbReference type="PROSITE" id="PS51874">
    <property type="entry name" value="PCV_3C_PRO"/>
    <property type="match status" value="1"/>
</dbReference>
<dbReference type="PROSITE" id="PS50507">
    <property type="entry name" value="RDRP_SSRNA_POS"/>
    <property type="match status" value="1"/>
</dbReference>
<dbReference type="PROSITE" id="PS51218">
    <property type="entry name" value="SF3_HELICASE_2"/>
    <property type="match status" value="1"/>
</dbReference>
<name>POLG_CXB6S</name>
<organism>
    <name type="scientific">Coxsackievirus B6 (strain Schmitt)</name>
    <dbReference type="NCBI Taxonomy" id="231474"/>
    <lineage>
        <taxon>Viruses</taxon>
        <taxon>Riboviria</taxon>
        <taxon>Orthornavirae</taxon>
        <taxon>Pisuviricota</taxon>
        <taxon>Pisoniviricetes</taxon>
        <taxon>Picornavirales</taxon>
        <taxon>Picornaviridae</taxon>
        <taxon>Ensavirinae</taxon>
        <taxon>Enterovirus</taxon>
        <taxon>Enterovirus B</taxon>
    </lineage>
</organism>
<evidence type="ECO:0000250" key="1">
    <source>
        <dbReference type="UniProtKB" id="B9VUU3"/>
    </source>
</evidence>
<evidence type="ECO:0000250" key="2">
    <source>
        <dbReference type="UniProtKB" id="P03300"/>
    </source>
</evidence>
<evidence type="ECO:0000250" key="3">
    <source>
        <dbReference type="UniProtKB" id="P03301"/>
    </source>
</evidence>
<evidence type="ECO:0000250" key="4">
    <source>
        <dbReference type="UniProtKB" id="P03303"/>
    </source>
</evidence>
<evidence type="ECO:0000250" key="5">
    <source>
        <dbReference type="UniProtKB" id="P03313"/>
    </source>
</evidence>
<evidence type="ECO:0000250" key="6">
    <source>
        <dbReference type="UniProtKB" id="P04936"/>
    </source>
</evidence>
<evidence type="ECO:0000250" key="7">
    <source>
        <dbReference type="UniProtKB" id="Q66478"/>
    </source>
</evidence>
<evidence type="ECO:0000250" key="8">
    <source>
        <dbReference type="UniProtKB" id="Q9QF31"/>
    </source>
</evidence>
<evidence type="ECO:0000255" key="9"/>
<evidence type="ECO:0000255" key="10">
    <source>
        <dbReference type="PROSITE-ProRule" id="PRU00539"/>
    </source>
</evidence>
<evidence type="ECO:0000255" key="11">
    <source>
        <dbReference type="PROSITE-ProRule" id="PRU00551"/>
    </source>
</evidence>
<evidence type="ECO:0000255" key="12">
    <source>
        <dbReference type="PROSITE-ProRule" id="PRU01222"/>
    </source>
</evidence>
<evidence type="ECO:0000269" key="13">
    <source>
    </source>
</evidence>
<evidence type="ECO:0000305" key="14"/>
<evidence type="ECO:0000305" key="15">
    <source>
    </source>
</evidence>
<sequence length="2184" mass="243256">MGAQVSTQKTGAHETALNAQGNSVIHYTNINYYKDAASNSANRQDFTQDPSKFTEPVKDVMIKSLPALNSPTVEECGYSDRVRSITLGNSTITTQECANVVVAYGVWPDYLHDDEATAEDQPTQPDVATCRFYTLDSVSWQSSSAGWWWKFPDALSNMGLFGQNMQYHYLGRSGYTIHVQCNASKFHQGCLLVVCVPEAEMGCSNLNNAPLAADLSAGEVARQFTVEPANGQNQVQTAVHNAAMGVAVGNLTIFPHQWINLRTNNSATIVMPYINSVPMDNMFRHNNFTLMIIPFAKLAYSDGASTFVPITVTIAPMNAEYNGLRLAGHQGLPVMTTPGSTQFLTSDDFQSPCAMPQFDVTPEMNIPGQVNNLMEIAEVDSVVPVNNTETNVNGMDAYRIPVQSNMDTGGQVFGFPLQPGASSVFQRTLLGEILNYYTHWSGSIKLTFMFCGSAMATGKFLLAYSPPGAGAPKSRKDAMLGTHVIWDVGLQSSCVLCIPWISQTHYRFVVADEYTAGGFITCWYQTNVIVPLGAQSNCSILCFVSACNDFSVRMLRDTKFISQTAFYQSPVEGAIERAIARVADTMPSGPTNSEAVPALTAVETGHTSQVVPSDNMQTRHVKNYHSRSETSVENFLCRSACVYFTTYKNQTGATNRFASWVITTRQVAQLRRKLEMFTYLRFDIELTFVITSAQDQSTISQDAPVQTHQIMYVPPGGPVPTKVDDYAWQTSTNPSVFWTEGNAPPRMSVPFMSIGNAYSTFYDGWSDFSNKGIYGLNTLNNMGTLYIRHVNGPNPVPITSTVRIYFKPKHVKAWVPRPPRLCQYKTSRQVNFTVTGVTESRANITTMNTTGAFGQQSGAAYVGNYRVVNRHLATHADWQNCVWEDYNRDLLVSTTTAHGCDVIARCQCNTGVYFCASRNKHYPVTFEGPGLVEVQESEYYPKRYQSHVLLAAGFSEPGDCGGILRCEHGVIGLVTMGGEGVVGFADVRDLLWLEDDAMEQGVRDYVEQLGNAFGSGFTNQICEQVNLLKESLVGQDSILEKSLKALVKIISALVIVVRNHDDLITVTATLALIGCTTSPWRWLKQKVSQYYGIPMAERQSNGWLKKFTEMTNACKGMEWIAIKIQKFIEWLKARILPEVKEKHEFLNRLKQLPLLESQIATIEQSAPSQSDQEQLFSNVQYFAHYCRKYAPLYAAEAKRVFSLEKKMSNYIQFKSKCRIEPVCLLLHGSPGAGKSVATSLIGRSLAEKLNSSVYSLPPDPDHFDGYKQQAVVIMDDLCQNPDGKDVSLFCQMVSSVDFVPPMAALEEKGILFTSPFVLASTNAGSINAPTVSDSRALARRFHFDMNIEVISMYSQNGKINMPMSVKTCDEECCPVNFKKCCPLVCGKAIQFIDRRTQVRYSLDMLVTEMFREYNHRHSVGATLEALFQGPPVYREIKISVAPETPPPPAIADLLKSVDSEAVREYCKEKGWLVPEINSTLQIEKHVSRAFICLQALTTFVSVAGIIYIIYKLFAGFQGAYTGMPNQKPKVPTLRQAKVQGPAFEFAVAMMKRNSSTVKTEYGEFTMLGVYDRWAVLPRHAKPGPTILMNDQEVGVLDAKELVDKDGTNLELTLLKLNRNEKFRDIRGFLAKEEVEVNEAVLAINTSKFPNMYIPVGQVTDYGFLNLGGTPTKRMLMYNFPTRAGQCGGVLMSTGKVLGIHVGGNGHQGFSAALLKHYFNDEQGEIEFIESSKDAGFPIINTPSKTKLEPSVFHQVFEGNKEPAVLRNGDPRLKANFEEAIFSKYIGNVNTHVDEYMLEAVDHYAGQLATLDINTEPMKLEDAVYGTEGLEALDLTTSAGYPYVALGIKKRDILSKKSKDLTKLKECMDKYGLNLPMVTYVKDELRSAEKVAKGKSRLIEASSLNDSVAMRQTFGNLYKTFHLNPGIVTGSAVGCDPDLFWSKIPVMLDGHLIAFDYSGYDASLSPVWFACLKLLLEKLGYTHKETNYIDYLCNSHHLYRDKHYFVRGGMPSGCSGTSIFNSMINNIIIRTLMLKVYKGIDLDQFRMIAYGDDVIASYPWPIDASLLAEAGKGYGLIMTPADKGECFNEVTWTNVTFLKRYFRADEQYPFLVHPVMPMKDIHESIRWTKDPKNTQDHVRSLCLLAWHNGEHEYEEFIRKVRSVPVGRCLTLPAFSTLRRKWLDSF</sequence>
<organismHost>
    <name type="scientific">Homo sapiens</name>
    <name type="common">Human</name>
    <dbReference type="NCBI Taxonomy" id="9606"/>
</organismHost>
<accession>Q9QL88</accession>
<accession>Q9QAH1</accession>
<accession>Q9YXE3</accession>
<protein>
    <recommendedName>
        <fullName>Genome polyprotein</fullName>
    </recommendedName>
    <component>
        <recommendedName>
            <fullName>P1</fullName>
        </recommendedName>
    </component>
    <component>
        <recommendedName>
            <fullName>Capsid protein VP0</fullName>
        </recommendedName>
        <alternativeName>
            <fullName>VP4-VP2</fullName>
        </alternativeName>
    </component>
    <component>
        <recommendedName>
            <fullName>Capsid protein VP4</fullName>
        </recommendedName>
        <alternativeName>
            <fullName>P1A</fullName>
        </alternativeName>
        <alternativeName>
            <fullName>Virion protein 4</fullName>
        </alternativeName>
    </component>
    <component>
        <recommendedName>
            <fullName>Capsid protein VP2</fullName>
        </recommendedName>
        <alternativeName>
            <fullName>P1B</fullName>
        </alternativeName>
        <alternativeName>
            <fullName>Virion protein 2</fullName>
        </alternativeName>
    </component>
    <component>
        <recommendedName>
            <fullName>Capsid protein VP3</fullName>
        </recommendedName>
        <alternativeName>
            <fullName>P1C</fullName>
        </alternativeName>
        <alternativeName>
            <fullName>Virion protein 3</fullName>
        </alternativeName>
    </component>
    <component>
        <recommendedName>
            <fullName>Capsid protein VP1</fullName>
        </recommendedName>
        <alternativeName>
            <fullName>P1D</fullName>
        </alternativeName>
        <alternativeName>
            <fullName>Virion protein 1</fullName>
        </alternativeName>
    </component>
    <component>
        <recommendedName>
            <fullName>P2</fullName>
        </recommendedName>
    </component>
    <component>
        <recommendedName>
            <fullName>Protease 2A</fullName>
            <shortName>P2A</shortName>
            <ecNumber evidence="2">3.4.22.29</ecNumber>
        </recommendedName>
        <alternativeName>
            <fullName>Picornain 2A</fullName>
        </alternativeName>
        <alternativeName>
            <fullName>Protein 2A</fullName>
        </alternativeName>
    </component>
    <component>
        <recommendedName>
            <fullName>Protein 2B</fullName>
            <shortName>P2B</shortName>
        </recommendedName>
    </component>
    <component>
        <recommendedName>
            <fullName>Protein 2C</fullName>
            <shortName>P2C</shortName>
            <ecNumber evidence="2">3.6.1.15</ecNumber>
        </recommendedName>
    </component>
    <component>
        <recommendedName>
            <fullName>P3</fullName>
        </recommendedName>
    </component>
    <component>
        <recommendedName>
            <fullName>Protein 3AB</fullName>
        </recommendedName>
    </component>
    <component>
        <recommendedName>
            <fullName>Protein 3A</fullName>
            <shortName>P3A</shortName>
        </recommendedName>
    </component>
    <component>
        <recommendedName>
            <fullName>Viral protein genome-linked</fullName>
            <shortName>VPg</shortName>
        </recommendedName>
        <alternativeName>
            <fullName>Protein 3B</fullName>
            <shortName>P3B</shortName>
        </alternativeName>
    </component>
    <component>
        <recommendedName>
            <fullName>Protein 3CD</fullName>
            <ecNumber>3.4.22.28</ecNumber>
        </recommendedName>
    </component>
    <component>
        <recommendedName>
            <fullName evidence="12">Protease 3C</fullName>
            <ecNumber evidence="12">3.4.22.28</ecNumber>
        </recommendedName>
        <alternativeName>
            <fullName evidence="12">Picornain 3C</fullName>
            <shortName evidence="12">P3C</shortName>
        </alternativeName>
    </component>
    <component>
        <recommendedName>
            <fullName evidence="10">RNA-directed RNA polymerase</fullName>
            <shortName>RdRp</shortName>
            <ecNumber evidence="10">2.7.7.48</ecNumber>
        </recommendedName>
        <alternativeName>
            <fullName>3D polymerase</fullName>
            <shortName>3Dpol</shortName>
        </alternativeName>
        <alternativeName>
            <fullName>Protein 3D</fullName>
            <shortName>3D</shortName>
        </alternativeName>
    </component>
</protein>
<feature type="initiator methionine" description="Removed; by host" evidence="2">
    <location>
        <position position="1"/>
    </location>
</feature>
<feature type="chain" id="PRO_0000426341" description="Genome polyprotein">
    <location>
        <begin position="2"/>
        <end position="2184"/>
    </location>
</feature>
<feature type="chain" id="PRO_0000426342" description="P1">
    <location>
        <begin position="2"/>
        <end position="850"/>
    </location>
</feature>
<feature type="chain" id="PRO_0000426343" description="Capsid protein VP0">
    <location>
        <begin position="2"/>
        <end position="330"/>
    </location>
</feature>
<feature type="chain" id="PRO_0000426344" description="Capsid protein VP4">
    <location>
        <begin position="2"/>
        <end position="69"/>
    </location>
</feature>
<feature type="chain" id="PRO_0000426345" description="Capsid protein VP2">
    <location>
        <begin position="70"/>
        <end position="330"/>
    </location>
</feature>
<feature type="chain" id="PRO_0000426346" description="Capsid protein VP3">
    <location>
        <begin position="331"/>
        <end position="568"/>
    </location>
</feature>
<feature type="chain" id="PRO_0000426347" description="Capsid protein VP1">
    <location>
        <begin position="569"/>
        <end position="850"/>
    </location>
</feature>
<feature type="chain" id="PRO_0000426348" description="P2">
    <location>
        <begin position="851"/>
        <end position="1428"/>
    </location>
</feature>
<feature type="chain" id="PRO_0000426349" description="Protease 2A">
    <location>
        <begin position="851"/>
        <end position="1000"/>
    </location>
</feature>
<feature type="chain" id="PRO_0000039642" description="Protein 2B">
    <location>
        <begin position="1001"/>
        <end position="1099"/>
    </location>
</feature>
<feature type="chain" id="PRO_0000039643" description="Protein 2C">
    <location>
        <begin position="1100"/>
        <end position="1428"/>
    </location>
</feature>
<feature type="chain" id="PRO_0000426350" description="P3">
    <location>
        <begin position="1429"/>
        <end position="2184"/>
    </location>
</feature>
<feature type="chain" id="PRO_0000426351" description="Protein 3AB">
    <location>
        <begin position="1429"/>
        <end position="1539"/>
    </location>
</feature>
<feature type="chain" id="PRO_0000039644" description="Protein 3A">
    <location>
        <begin position="1429"/>
        <end position="1517"/>
    </location>
</feature>
<feature type="chain" id="PRO_0000426352" description="Viral protein genome-linked">
    <location>
        <begin position="1518"/>
        <end position="1539"/>
    </location>
</feature>
<feature type="chain" id="PRO_0000426353" description="Protein 3CD">
    <location>
        <begin position="1540"/>
        <end position="2184"/>
    </location>
</feature>
<feature type="chain" id="PRO_0000426354" description="Protease 3C">
    <location>
        <begin position="1540"/>
        <end position="1722"/>
    </location>
</feature>
<feature type="chain" id="PRO_0000426355" description="RNA-directed RNA polymerase">
    <location>
        <begin position="1723"/>
        <end position="2184"/>
    </location>
</feature>
<feature type="topological domain" description="Cytoplasmic" evidence="9">
    <location>
        <begin position="2"/>
        <end position="1494"/>
    </location>
</feature>
<feature type="intramembrane region" evidence="9">
    <location>
        <begin position="1495"/>
        <end position="1510"/>
    </location>
</feature>
<feature type="topological domain" description="Cytoplasmic" evidence="9">
    <location>
        <begin position="1511"/>
        <end position="2184"/>
    </location>
</feature>
<feature type="domain" description="SF3 helicase" evidence="11">
    <location>
        <begin position="1204"/>
        <end position="1360"/>
    </location>
</feature>
<feature type="domain" description="Peptidase C3" evidence="12">
    <location>
        <begin position="1540"/>
        <end position="1718"/>
    </location>
</feature>
<feature type="domain" description="RdRp catalytic" evidence="10">
    <location>
        <begin position="1949"/>
        <end position="2065"/>
    </location>
</feature>
<feature type="zinc finger region" description="C4-type; degenerate" evidence="1">
    <location>
        <begin position="1368"/>
        <end position="1385"/>
    </location>
</feature>
<feature type="region of interest" description="Amphipathic alpha-helix" evidence="9">
    <location>
        <begin position="566"/>
        <end position="582"/>
    </location>
</feature>
<feature type="region of interest" description="Oligomerization" evidence="2">
    <location>
        <begin position="1100"/>
        <end position="1238"/>
    </location>
</feature>
<feature type="region of interest" description="Membrane-binding" evidence="2">
    <location>
        <begin position="1100"/>
        <end position="1172"/>
    </location>
</feature>
<feature type="region of interest" description="RNA-binding" evidence="2">
    <location>
        <begin position="1121"/>
        <end position="1125"/>
    </location>
</feature>
<feature type="region of interest" description="RNA-binding" evidence="2">
    <location>
        <begin position="1412"/>
        <end position="1419"/>
    </location>
</feature>
<feature type="region of interest" description="Oligomerization" evidence="2">
    <location>
        <begin position="1423"/>
        <end position="1428"/>
    </location>
</feature>
<feature type="active site" description="For protease 2A activity" evidence="2">
    <location>
        <position position="871"/>
    </location>
</feature>
<feature type="active site" description="For protease 2A activity" evidence="2">
    <location>
        <position position="889"/>
    </location>
</feature>
<feature type="active site" description="For protease 2A activity" evidence="2">
    <location>
        <position position="960"/>
    </location>
</feature>
<feature type="active site" description="For protease 3C activity" evidence="12">
    <location>
        <position position="1579"/>
    </location>
</feature>
<feature type="active site" description="For protease 3C activity" evidence="12">
    <location>
        <position position="1610"/>
    </location>
</feature>
<feature type="active site" description="For protease 3C activity" evidence="12">
    <location>
        <position position="1686"/>
    </location>
</feature>
<feature type="binding site" evidence="8">
    <location>
        <position position="906"/>
    </location>
    <ligand>
        <name>Zn(2+)</name>
        <dbReference type="ChEBI" id="CHEBI:29105"/>
        <label>1</label>
        <note>structural</note>
    </ligand>
</feature>
<feature type="binding site" evidence="8">
    <location>
        <position position="908"/>
    </location>
    <ligand>
        <name>Zn(2+)</name>
        <dbReference type="ChEBI" id="CHEBI:29105"/>
        <label>1</label>
        <note>structural</note>
    </ligand>
</feature>
<feature type="binding site" evidence="8">
    <location>
        <position position="966"/>
    </location>
    <ligand>
        <name>Zn(2+)</name>
        <dbReference type="ChEBI" id="CHEBI:29105"/>
        <label>1</label>
        <note>structural</note>
    </ligand>
</feature>
<feature type="binding site" evidence="8">
    <location>
        <position position="968"/>
    </location>
    <ligand>
        <name>Zn(2+)</name>
        <dbReference type="ChEBI" id="CHEBI:29105"/>
        <label>1</label>
        <note>structural</note>
    </ligand>
</feature>
<feature type="binding site" evidence="1">
    <location>
        <position position="1368"/>
    </location>
    <ligand>
        <name>Zn(2+)</name>
        <dbReference type="ChEBI" id="CHEBI:29105"/>
        <label>2</label>
    </ligand>
</feature>
<feature type="binding site" evidence="1">
    <location>
        <position position="1380"/>
    </location>
    <ligand>
        <name>Zn(2+)</name>
        <dbReference type="ChEBI" id="CHEBI:29105"/>
        <label>2</label>
    </ligand>
</feature>
<feature type="binding site" evidence="1">
    <location>
        <position position="1385"/>
    </location>
    <ligand>
        <name>Zn(2+)</name>
        <dbReference type="ChEBI" id="CHEBI:29105"/>
        <label>2</label>
    </ligand>
</feature>
<feature type="binding site" evidence="2">
    <location>
        <position position="1955"/>
    </location>
    <ligand>
        <name>Mg(2+)</name>
        <dbReference type="ChEBI" id="CHEBI:18420"/>
        <label>1</label>
        <note>catalytic; for RdRp activity</note>
    </ligand>
</feature>
<feature type="binding site" evidence="2">
    <location>
        <position position="1955"/>
    </location>
    <ligand>
        <name>Mg(2+)</name>
        <dbReference type="ChEBI" id="CHEBI:18420"/>
        <label>2</label>
        <note>catalytic; for RdRp activity</note>
    </ligand>
</feature>
<feature type="binding site" evidence="2">
    <location>
        <position position="2051"/>
    </location>
    <ligand>
        <name>Mg(2+)</name>
        <dbReference type="ChEBI" id="CHEBI:18420"/>
        <label>1</label>
        <note>catalytic; for RdRp activity</note>
    </ligand>
</feature>
<feature type="binding site" evidence="2">
    <location>
        <position position="2051"/>
    </location>
    <ligand>
        <name>Mg(2+)</name>
        <dbReference type="ChEBI" id="CHEBI:18420"/>
        <label>2</label>
        <note>catalytic; for RdRp activity</note>
    </ligand>
</feature>
<feature type="site" description="Cleavage; by autolysis" evidence="2">
    <location>
        <begin position="69"/>
        <end position="70"/>
    </location>
</feature>
<feature type="site" description="Cleavage; by protease 3C" evidence="3">
    <location>
        <begin position="330"/>
        <end position="331"/>
    </location>
</feature>
<feature type="site" description="Cleavage; by autolysis" evidence="3">
    <location>
        <begin position="850"/>
        <end position="851"/>
    </location>
</feature>
<feature type="site" description="Cleavage; by protease 3C" evidence="3">
    <location>
        <begin position="1000"/>
        <end position="1001"/>
    </location>
</feature>
<feature type="site" description="Cleavage; by protease 3C" evidence="3">
    <location>
        <begin position="1099"/>
        <end position="1100"/>
    </location>
</feature>
<feature type="site" description="Involved in the interaction with host RTN3" evidence="7">
    <location>
        <position position="1124"/>
    </location>
</feature>
<feature type="site" description="Cleavage; by protease 3C" evidence="3">
    <location>
        <begin position="1428"/>
        <end position="1429"/>
    </location>
</feature>
<feature type="site" description="Cleavage; by protease 3C" evidence="3">
    <location>
        <begin position="1517"/>
        <end position="1518"/>
    </location>
</feature>
<feature type="site" description="Cleavage; by protease 3C" evidence="3">
    <location>
        <begin position="1539"/>
        <end position="1540"/>
    </location>
</feature>
<feature type="site" description="Cleavage; by protease 3C" evidence="3">
    <location>
        <begin position="1722"/>
        <end position="1723"/>
    </location>
</feature>
<feature type="modified residue" description="O-(5'-phospho-RNA)-tyrosine" evidence="2">
    <location>
        <position position="1520"/>
    </location>
</feature>
<feature type="lipid moiety-binding region" description="N-myristoyl glycine; by host" evidence="2">
    <location>
        <position position="2"/>
    </location>
</feature>
<feature type="sequence conflict" description="In Ref. 2; AAD02132." evidence="14" ref="2">
    <original>I</original>
    <variation>L</variation>
    <location>
        <position position="25"/>
    </location>
</feature>
<feature type="sequence conflict" description="In Ref. 2; AAD02132." evidence="14" ref="2">
    <original>T</original>
    <variation>P</variation>
    <location>
        <position position="447"/>
    </location>
</feature>
<feature type="sequence conflict" description="In Ref. 3; AAF21972." evidence="14" ref="3">
    <original>S</original>
    <variation>R</variation>
    <location>
        <position position="562"/>
    </location>
</feature>
<feature type="sequence conflict" description="In Ref. 2; AAD02132." evidence="14" ref="2">
    <original>T</original>
    <variation>K</variation>
    <location>
        <position position="654"/>
    </location>
</feature>
<feature type="sequence conflict" description="In Ref. 1; AAF12719." evidence="14" ref="1">
    <original>D</original>
    <variation>N</variation>
    <location>
        <position position="986"/>
    </location>
</feature>
<feature type="sequence conflict" description="In Ref. 2; AAD02132." evidence="14" ref="2">
    <original>M</original>
    <variation>V</variation>
    <location>
        <position position="1110"/>
    </location>
</feature>
<feature type="sequence conflict" description="In Ref. 2; AAD02132." evidence="14" ref="2">
    <original>W</original>
    <variation>R</variation>
    <location>
        <position position="2126"/>
    </location>
</feature>
<proteinExistence type="evidence at protein level"/>
<comment type="function">
    <molecule>Capsid protein VP1</molecule>
    <text evidence="2 15">Forms an icosahedral capsid of pseudo T=3 symmetry with capsid proteins VP2 and VP3 (By similarity). The capsid is 300 Angstroms in diameter, composed of 60 copies of each capsid protein and enclosing the viral positive strand RNA genome (By similarity). Capsid protein VP1 mainly forms the vertices of the capsid (By similarity). Capsid protein VP1 interacts with host CXADR to provide virion attachment to target host cells (Probable). This attachment induces virion internalization (By similarity). Tyrosine kinases are probably involved in the entry process (By similarity). After binding to its receptor, the capsid undergoes conformational changes (By similarity). Capsid protein VP1 N-terminus (that contains an amphipathic alpha-helix) and capsid protein VP4 are externalized (By similarity). Together, they shape a pore in the host membrane through which viral genome is translocated to host cell cytoplasm (By similarity).</text>
</comment>
<comment type="function">
    <molecule>Capsid protein VP2</molecule>
    <text evidence="2">Forms an icosahedral capsid of pseudo T=3 symmetry with capsid proteins VP2 and VP3 (By similarity). The capsid is 300 Angstroms in diameter, composed of 60 copies of each capsid protein and enclosing the viral positive strand RNA genome (By similarity).</text>
</comment>
<comment type="function">
    <molecule>Capsid protein VP3</molecule>
    <text evidence="2">Forms an icosahedral capsid of pseudo T=3 symmetry with capsid proteins VP2 and VP3 (By similarity). The capsid is 300 Angstroms in diameter, composed of 60 copies of each capsid protein and enclosing the viral positive strand RNA genome (By similarity).</text>
</comment>
<comment type="function">
    <molecule>Capsid protein VP4</molecule>
    <text evidence="2">Lies on the inner surface of the capsid shell (By similarity). After binding to the host receptor, the capsid undergoes conformational changes (By similarity). Capsid protein VP4 is released, Capsid protein VP1 N-terminus is externalized, and together, they shape a pore in the host membrane through which the viral genome is translocated into the host cell cytoplasm (By similarity).</text>
</comment>
<comment type="function">
    <molecule>Capsid protein VP0</molecule>
    <text evidence="2">Component of immature procapsids, which is cleaved into capsid proteins VP4 and VP2 after maturation (By similarity). Allows the capsid to remain inactive before the maturation step (By similarity).</text>
</comment>
<comment type="function">
    <molecule>Protease 2A</molecule>
    <text evidence="2 5">Cysteine protease that cleaves viral polyprotein and specific host proteins (By similarity). It is responsible for the autocatalytic cleavage between the P1 and P2 regions, which is the first cleavage occurring in the polyprotein (By similarity). Also cleaves the host translation initiation factor EIF4G1, in order to shut down the capped cellular mRNA translation (By similarity). Inhibits the host nucleus-cytoplasm protein and RNA trafficking by cleaving host members of the nuclear pores (By similarity). Counteracts stress granule formation probably by antagonizing its assembly or promoting its dissassembly (By similarity). Cleaves and inhibits host IFIH1/MDA5, thereby inhibiting the type-I IFN production and the establishment of the antiviral state (By similarity). Cleaves and inhibits host MAVS, thereby inhibiting the type-I IFN production and the establishment of the antiviral state (By similarity).</text>
</comment>
<comment type="function">
    <molecule>Protein 2B</molecule>
    <text evidence="2">Plays an essential role in the virus replication cycle by acting as a viroporin. Creates a pore in the host endoplasmic reticulum and as a consequence releases Ca2+ in the cytoplasm of infected cell. In turn, high levels of cytoplasmic calcium may trigger membrane trafficking and transport of viral ER-associated proteins to viroplasms, sites of viral genome replication.</text>
</comment>
<comment type="function">
    <molecule>Protein 2C</molecule>
    <text evidence="2">Induces and associates with structural rearrangements of intracellular membranes. Displays RNA-binding, nucleotide binding and NTPase activities. May play a role in virion morphogenesis and viral RNA encapsidation by interacting with the capsid protein VP3.</text>
</comment>
<comment type="function">
    <molecule>Protein 3AB</molecule>
    <text evidence="2">Localizes the viral replication complex to the surface of membranous vesicles. Together with protein 3CD binds the Cis-Active RNA Element (CRE) which is involved in RNA synthesis initiation. Acts as a cofactor to stimulate the activity of 3D polymerase, maybe through a nucleid acid chaperone activity.</text>
</comment>
<comment type="function">
    <molecule>Protein 3A</molecule>
    <text evidence="2 5">Localizes the viral replication complex to the surface of membranous vesicles (By similarity). It inhibits host cell endoplasmic reticulum-to-Golgi apparatus transport and causes the disassembly of the Golgi complex, possibly through GBF1 interaction (By similarity). This would result in depletion of MHC, trail receptors and IFN receptors at the host cell surface (By similarity). Plays an essential role in viral RNA replication by recruiting ACBD3 and PI4KB at the viral replication sites, thereby allowing the formation of the rearranged membranous structures where viral replication takes place (By similarity).</text>
</comment>
<comment type="function">
    <molecule>Viral protein genome-linked</molecule>
    <text evidence="2">Acts as a primer for viral RNA replication and remains covalently bound to viral genomic RNA. VPg is uridylylated prior to priming replication into VPg-pUpU. The oriI viral genomic sequence may act as a template for this. The VPg-pUpU is then used as primer on the genomic RNA poly(A) by the RNA-dependent RNA polymerase to replicate the viral genome. During genome replication, the VPg-RNA linkage is removed by the host TDP2, thereby accelerating replication. During the late stage of the replication cycle, host TDP2 is excluded from sites of viral RNA synthesis and encapsidation, allowing for the generation of progeny virions.</text>
</comment>
<comment type="function">
    <molecule>Protein 3CD</molecule>
    <text evidence="2">Involved in the viral replication complex and viral polypeptide maturation. It exhibits protease activity with a specificity and catalytic efficiency that is different from protease 3C. Protein 3CD lacks polymerase activity. Protein 3CD binds to the 5'UTR of the viral genome.</text>
</comment>
<comment type="function">
    <molecule>RNA-directed RNA polymerase</molecule>
    <text evidence="2">Replicates the viral genomic RNA on the surface of intracellular membranes. May form linear arrays of subunits that propagate along a strong head-to-tail interaction called interface-I. Covalently attaches UMP to a tyrosine of VPg, which is used to prime RNA synthesis. The positive stranded RNA genome is first replicated at virus induced membranous vesicles, creating a dsRNA genomic replication form. This dsRNA is then used as template to synthesize positive stranded RNA genomes. ss(+)RNA genomes are either translated, replicated or encapsidated.</text>
</comment>
<comment type="function">
    <molecule>Protease 3C</molecule>
    <text evidence="2 4">Major viral protease that mediates proteolytic processing of the polyprotein (By similarity). Cleaves host EIF5B, contributing to host translation shutoff (By similarity). Also cleaves host PABPC1, contributing to host translation shutoff (By similarity). Cleaves host NLRP1, triggers host N-glycine-mediated degradation of the autoinhibitory NLRP1 N-terminal fragment (By similarity).</text>
</comment>
<comment type="catalytic activity">
    <molecule>Protein 2C</molecule>
    <reaction evidence="2">
        <text>a ribonucleoside 5'-triphosphate + H2O = a ribonucleoside 5'-diphosphate + phosphate + H(+)</text>
        <dbReference type="Rhea" id="RHEA:23680"/>
        <dbReference type="ChEBI" id="CHEBI:15377"/>
        <dbReference type="ChEBI" id="CHEBI:15378"/>
        <dbReference type="ChEBI" id="CHEBI:43474"/>
        <dbReference type="ChEBI" id="CHEBI:57930"/>
        <dbReference type="ChEBI" id="CHEBI:61557"/>
        <dbReference type="EC" id="3.6.1.15"/>
    </reaction>
</comment>
<comment type="catalytic activity">
    <molecule>Protease 2A</molecule>
    <reaction evidence="2">
        <text>Selective cleavage of Tyr-|-Gly bond in the picornavirus polyprotein.</text>
        <dbReference type="EC" id="3.4.22.29"/>
    </reaction>
</comment>
<comment type="catalytic activity">
    <molecule>RNA-directed RNA polymerase</molecule>
    <reaction evidence="10">
        <text>RNA(n) + a ribonucleoside 5'-triphosphate = RNA(n+1) + diphosphate</text>
        <dbReference type="Rhea" id="RHEA:21248"/>
        <dbReference type="Rhea" id="RHEA-COMP:14527"/>
        <dbReference type="Rhea" id="RHEA-COMP:17342"/>
        <dbReference type="ChEBI" id="CHEBI:33019"/>
        <dbReference type="ChEBI" id="CHEBI:61557"/>
        <dbReference type="ChEBI" id="CHEBI:140395"/>
        <dbReference type="EC" id="2.7.7.48"/>
    </reaction>
</comment>
<comment type="catalytic activity">
    <molecule>Protease 3C</molecule>
    <reaction evidence="12">
        <text>Selective cleavage of Gln-|-Gly bond in the poliovirus polyprotein. In other picornavirus reactions Glu may be substituted for Gln, and Ser or Thr for Gly.</text>
        <dbReference type="EC" id="3.4.22.28"/>
    </reaction>
</comment>
<comment type="cofactor">
    <molecule>RNA-directed RNA polymerase</molecule>
    <cofactor evidence="2">
        <name>Mg(2+)</name>
        <dbReference type="ChEBI" id="CHEBI:18420"/>
    </cofactor>
    <text evidence="2 5">Binds 2 magnesium ions that constitute a dinuclear catalytic metal center (By similarity). The magnesium ions are not prebound but only present for catalysis (By similarity). Requires the presence of 3CDpro or 3CPro (By similarity).</text>
</comment>
<comment type="activity regulation">
    <molecule>RNA-directed RNA polymerase</molecule>
    <text evidence="2">Replication or transcription is subject to high level of random mutations by the nucleotide analog ribavirin.</text>
</comment>
<comment type="subunit">
    <molecule>Capsid protein VP0</molecule>
    <text evidence="2">Interacts with capsid protein VP1 and capsid protein VP3 to form heterotrimeric protomers.</text>
</comment>
<comment type="subunit">
    <molecule>Capsid protein VP1</molecule>
    <text evidence="2 13">Interacts with capsid protein VP0, and capsid protein VP3 to form heterotrimeric protomers (By similarity). Five protomers subsequently associate to form pentamers which serve as building blocks for the capsid (By similarity). Interacts with capsid protein VP2, capsid protein VP3 and capsid protein VP4 following cleavage of capsid protein VP0 (By similarity). Interacts with host CXADR (PubMed:10814575).</text>
</comment>
<comment type="subunit">
    <molecule>Capsid protein VP2</molecule>
    <text evidence="2">Interacts with capsid protein VP1 and capsid protein VP3 in the mature capsid.</text>
</comment>
<comment type="subunit">
    <molecule>Capsid protein VP3</molecule>
    <text evidence="2">Interacts with capsid protein VP0 and capsid protein VP1 to form heterotrimeric protomers (By similarity). Five protomers subsequently associate to form pentamers which serve as building blocks for the capsid (By similarity). Interacts with capsid protein VP4 in the mature capsid (By similarity). Interacts with protein 2C; this interaction may be important for virion morphogenesis (By similarity).</text>
</comment>
<comment type="subunit">
    <molecule>Capsid protein VP4</molecule>
    <text evidence="2">Interacts with capsid protein VP1 and capsid protein VP3.</text>
</comment>
<comment type="subunit">
    <molecule>Protease 2A</molecule>
    <text evidence="6">Homodimer.</text>
</comment>
<comment type="subunit">
    <molecule>Protein 2C</molecule>
    <text evidence="2">Homohexamer; forms a hexameric ring structure with 6-fold symmetry characteristic of AAA+ ATPases (By similarity). Interacts (via N-terminus) with host RTN3 (via reticulon domain); this interaction is important for viral replication (By similarity). Interacts with capsid protein VP3; this interaction may be important for virion morphogenesis (By similarity).</text>
</comment>
<comment type="subunit">
    <molecule>Protein 3AB</molecule>
    <text evidence="2">Interacts with protein 3CD.</text>
</comment>
<comment type="subunit">
    <molecule>Protein 3A</molecule>
    <text evidence="2 5">Homodimer (By similarity). Interacts with host GBF1 (By similarity). Interacts (via GOLD domain) with host ACBD3 (via GOLD domain); this interaction allows the formation of a viral protein 3A/ACBD3 heterotetramer with a 2:2 stoichiometry, which will stimulate the recruitment of host PI4KB in order to synthesize PI4P at the viral RNA replication sites (By similarity).</text>
</comment>
<comment type="subunit">
    <molecule>Viral protein genome-linked</molecule>
    <text evidence="2">Interacts with RNA-directed RNA polymerase.</text>
</comment>
<comment type="subunit">
    <molecule>Protein 3CD</molecule>
    <text evidence="2">Interacts with protein 3AB and with RNA-directed RNA polymerase.</text>
</comment>
<comment type="subunit">
    <molecule>RNA-directed RNA polymerase</molecule>
    <text evidence="2">Interacts with Viral protein genome-linked and with protein 3CD.</text>
</comment>
<comment type="subcellular location">
    <molecule>Capsid protein VP0</molecule>
    <subcellularLocation>
        <location>Virion</location>
    </subcellularLocation>
    <subcellularLocation>
        <location evidence="14">Host cytoplasm</location>
    </subcellularLocation>
</comment>
<comment type="subcellular location">
    <molecule>Capsid protein VP4</molecule>
    <subcellularLocation>
        <location>Virion</location>
    </subcellularLocation>
</comment>
<comment type="subcellular location">
    <molecule>Capsid protein VP2</molecule>
    <subcellularLocation>
        <location evidence="2">Virion</location>
    </subcellularLocation>
    <subcellularLocation>
        <location evidence="14">Host cytoplasm</location>
    </subcellularLocation>
</comment>
<comment type="subcellular location">
    <molecule>Capsid protein VP3</molecule>
    <subcellularLocation>
        <location evidence="2">Virion</location>
    </subcellularLocation>
    <subcellularLocation>
        <location evidence="14">Host cytoplasm</location>
    </subcellularLocation>
</comment>
<comment type="subcellular location">
    <molecule>Capsid protein VP1</molecule>
    <subcellularLocation>
        <location evidence="2">Virion</location>
    </subcellularLocation>
    <subcellularLocation>
        <location evidence="14">Host cytoplasm</location>
    </subcellularLocation>
</comment>
<comment type="subcellular location">
    <molecule>Protein 2B</molecule>
    <subcellularLocation>
        <location evidence="14">Host cytoplasmic vesicle membrane</location>
        <topology evidence="14">Peripheral membrane protein</topology>
        <orientation evidence="14">Cytoplasmic side</orientation>
    </subcellularLocation>
    <text>Probably localizes to the surface of intracellular membrane vesicles that are induced after virus infection as the site for viral RNA replication. These vesicles are derived from the endoplasmic reticulum.</text>
</comment>
<comment type="subcellular location">
    <molecule>Protein 2C</molecule>
    <subcellularLocation>
        <location evidence="14">Host cytoplasmic vesicle membrane</location>
        <topology evidence="14">Peripheral membrane protein</topology>
        <orientation evidence="14">Cytoplasmic side</orientation>
    </subcellularLocation>
    <text>Probably localizes to the surface of intracellular membrane vesicles that are induced after virus infection as the site for viral RNA replication. These vesicles are derived from the endoplasmic reticulum.</text>
</comment>
<comment type="subcellular location">
    <molecule>Protein 3A</molecule>
    <subcellularLocation>
        <location evidence="14">Host cytoplasmic vesicle membrane</location>
        <topology evidence="14">Peripheral membrane protein</topology>
        <orientation evidence="14">Cytoplasmic side</orientation>
    </subcellularLocation>
    <text>Probably localizes to the surface of intracellular membrane vesicles that are induced after virus infection as the site for viral RNA replication. These vesicles are derived from the endoplasmic reticulum.</text>
</comment>
<comment type="subcellular location">
    <molecule>Protein 3AB</molecule>
    <subcellularLocation>
        <location evidence="14">Host cytoplasmic vesicle membrane</location>
        <topology evidence="14">Peripheral membrane protein</topology>
        <orientation evidence="14">Cytoplasmic side</orientation>
    </subcellularLocation>
    <text>Probably localizes to the surface of intracellular membrane vesicles that are induced after virus infection as the site for viral RNA replication. These vesicles are derived from the endoplasmic reticulum.</text>
</comment>
<comment type="subcellular location">
    <molecule>Viral protein genome-linked</molecule>
    <subcellularLocation>
        <location evidence="2">Virion</location>
    </subcellularLocation>
    <subcellularLocation>
        <location evidence="7">Host cytoplasm</location>
    </subcellularLocation>
</comment>
<comment type="subcellular location">
    <molecule>Protease 3C</molecule>
    <subcellularLocation>
        <location>Host cytoplasm</location>
    </subcellularLocation>
</comment>
<comment type="subcellular location">
    <molecule>Protein 3CD</molecule>
    <subcellularLocation>
        <location evidence="2">Host nucleus</location>
    </subcellularLocation>
    <subcellularLocation>
        <location evidence="2">Host cytoplasm</location>
    </subcellularLocation>
    <subcellularLocation>
        <location evidence="14">Host cytoplasmic vesicle membrane</location>
        <topology evidence="14">Peripheral membrane protein</topology>
        <orientation evidence="14">Cytoplasmic side</orientation>
    </subcellularLocation>
    <text>Probably localizes to the surface of intracellular membrane vesicles that are induced after virus infection as the site for viral RNA replication. These vesicles are derived from the endoplasmic reticulum.</text>
</comment>
<comment type="subcellular location">
    <molecule>RNA-directed RNA polymerase</molecule>
    <subcellularLocation>
        <location evidence="14">Host cytoplasmic vesicle membrane</location>
        <topology evidence="14">Peripheral membrane protein</topology>
        <orientation evidence="14">Cytoplasmic side</orientation>
    </subcellularLocation>
    <text>Probably localizes to the surface of intracellular membrane vesicles that are induced after virus infection as the site for viral RNA replication. These vesicles are derived from the endoplasmic reticulum.</text>
</comment>
<comment type="domain">
    <molecule>Protein 2C</molecule>
    <text evidence="1 2">The N-terminus has membrane-binding (By similarity). The N-terminus also displays RNA-binding properties (By similarity). The N-terminus is involved in oligomerization (By similarity). The central part contains an ATPase domain and a degenerate C4-type zinc-finger with only 3 cysteines (By similarity). The C-terminus is involved in RNA-binding (By similarity). The extreme C-terminus contains a region involved in oligomerization (By similarity).</text>
</comment>
<comment type="PTM">
    <molecule>Genome polyprotein</molecule>
    <text evidence="2">Specific enzymatic cleavages in vivo by the viral proteases yield processing intermediates and the mature proteins.</text>
</comment>
<comment type="PTM">
    <molecule>Capsid protein VP0</molecule>
    <text evidence="2">Myristoylation is required for the formation of pentamers during virus assembly. Further assembly of 12 pentamers and a molecule of genomic RNA generates the provirion.</text>
</comment>
<comment type="PTM">
    <molecule>Capsid protein VP0</molecule>
    <text evidence="2">During virion maturation, immature virions are rendered infectious following cleavage of VP0 into VP4 and VP2. This maturation seems to be an autocatalytic event triggered by the presence of RNA in the capsid and it is followed by a conformational change infectious virion.</text>
</comment>
<comment type="PTM">
    <molecule>Capsid protein VP4</molecule>
    <text evidence="2">Myristoylation is required during RNA encapsidation and formation of the mature virus particle.</text>
</comment>
<comment type="PTM">
    <molecule>Viral protein genome-linked</molecule>
    <text evidence="2">VPg is uridylylated by the polymerase into VPg-pUpU. This acts as a nucleotide-peptide primer for the genomic RNA replication.</text>
</comment>
<comment type="similarity">
    <text evidence="14">Belongs to the picornaviruses polyprotein family.</text>
</comment>
<reference key="1">
    <citation type="journal article" date="1999" name="Virus Res.">
        <title>The complete consensus sequence of coxsackievirus B6 and generation of infectious clones by long RT-PCR.</title>
        <authorList>
            <person name="Martino T.A."/>
            <person name="Tellier R."/>
            <person name="Petric M."/>
            <person name="Irwin D.M."/>
            <person name="Afshar A."/>
            <person name="Liu P.P."/>
        </authorList>
    </citation>
    <scope>NUCLEOTIDE SEQUENCE [GENOMIC RNA]</scope>
</reference>
<reference key="2">
    <citation type="submission" date="1997-12" db="EMBL/GenBank/DDBJ databases">
        <title>Cloning and sequencing of an infectious cDNA of Coxsackievirus B6 (CVB6).</title>
        <authorList>
            <person name="Zell R.H."/>
        </authorList>
    </citation>
    <scope>NUCLEOTIDE SEQUENCE [GENOMIC RNA]</scope>
</reference>
<reference key="3">
    <citation type="submission" date="1998-12" db="EMBL/GenBank/DDBJ databases">
        <title>Strategy for sequence analysis of complete enterovirus genomes. The prototype strain of coxsackievirus B6.</title>
        <authorList>
            <person name="Lindberg A.M."/>
            <person name="Polacek C."/>
            <person name="Johansson S."/>
            <person name="Lundgren A."/>
            <person name="Andersson A."/>
            <person name="Van Ranst M."/>
        </authorList>
    </citation>
    <scope>NUCLEOTIDE SEQUENCE [GENOMIC RNA]</scope>
</reference>
<reference key="4">
    <citation type="journal article" date="2000" name="Virology">
        <title>The coxsackie-adenovirus receptor (CAR) is used by reference strains and clinical isolates representing all six serotypes of coxsackievirus group B and by swine vesicular disease virus.</title>
        <authorList>
            <person name="Martino T.A."/>
            <person name="Petric M."/>
            <person name="Weingartl H."/>
            <person name="Bergelson J.M."/>
            <person name="Opavsky M.A."/>
            <person name="Richardson C.D."/>
            <person name="Modlin J.F."/>
            <person name="Finberg R.W."/>
            <person name="Kain K.C."/>
            <person name="Willis N."/>
            <person name="Gauntt C.J."/>
            <person name="Liu P.P."/>
        </authorList>
    </citation>
    <scope>INTERACTION WITH HOST CXADR (CAPSID PROTEIN VP1)</scope>
</reference>